<evidence type="ECO:0000255" key="1">
    <source>
        <dbReference type="HAMAP-Rule" id="MF_00541"/>
    </source>
</evidence>
<feature type="chain" id="PRO_1000128895" description="L-rhamnose isomerase">
    <location>
        <begin position="1"/>
        <end position="418"/>
    </location>
</feature>
<feature type="binding site" evidence="1">
    <location>
        <position position="262"/>
    </location>
    <ligand>
        <name>Mn(2+)</name>
        <dbReference type="ChEBI" id="CHEBI:29035"/>
    </ligand>
</feature>
<feature type="binding site" evidence="1">
    <location>
        <position position="294"/>
    </location>
    <ligand>
        <name>Mn(2+)</name>
        <dbReference type="ChEBI" id="CHEBI:29035"/>
    </ligand>
</feature>
<feature type="binding site" evidence="1">
    <location>
        <position position="296"/>
    </location>
    <ligand>
        <name>Mn(2+)</name>
        <dbReference type="ChEBI" id="CHEBI:29035"/>
    </ligand>
</feature>
<gene>
    <name evidence="1" type="primary">rhaA</name>
    <name type="ordered locus">YpAngola_A0744</name>
</gene>
<name>RHAA_YERPG</name>
<proteinExistence type="inferred from homology"/>
<organism>
    <name type="scientific">Yersinia pestis bv. Antiqua (strain Angola)</name>
    <dbReference type="NCBI Taxonomy" id="349746"/>
    <lineage>
        <taxon>Bacteria</taxon>
        <taxon>Pseudomonadati</taxon>
        <taxon>Pseudomonadota</taxon>
        <taxon>Gammaproteobacteria</taxon>
        <taxon>Enterobacterales</taxon>
        <taxon>Yersiniaceae</taxon>
        <taxon>Yersinia</taxon>
    </lineage>
</organism>
<accession>A9QYS2</accession>
<protein>
    <recommendedName>
        <fullName evidence="1">L-rhamnose isomerase</fullName>
        <ecNumber evidence="1">5.3.1.14</ecNumber>
    </recommendedName>
</protein>
<keyword id="KW-0963">Cytoplasm</keyword>
<keyword id="KW-0413">Isomerase</keyword>
<keyword id="KW-0464">Manganese</keyword>
<keyword id="KW-0479">Metal-binding</keyword>
<keyword id="KW-0684">Rhamnose metabolism</keyword>
<comment type="function">
    <text evidence="1">Catalyzes the interconversion of L-rhamnose and L-rhamnulose.</text>
</comment>
<comment type="catalytic activity">
    <reaction evidence="1">
        <text>L-rhamnopyranose = L-rhamnulose</text>
        <dbReference type="Rhea" id="RHEA:23160"/>
        <dbReference type="ChEBI" id="CHEBI:17897"/>
        <dbReference type="ChEBI" id="CHEBI:62346"/>
        <dbReference type="EC" id="5.3.1.14"/>
    </reaction>
</comment>
<comment type="cofactor">
    <cofactor evidence="1">
        <name>Mn(2+)</name>
        <dbReference type="ChEBI" id="CHEBI:29035"/>
    </cofactor>
    <text evidence="1">Binds 1 Mn(2+) ion per subunit.</text>
</comment>
<comment type="pathway">
    <text evidence="1">Carbohydrate degradation; L-rhamnose degradation; glycerone phosphate from L-rhamnose: step 1/3.</text>
</comment>
<comment type="subunit">
    <text evidence="1">Homotetramer.</text>
</comment>
<comment type="subcellular location">
    <subcellularLocation>
        <location evidence="1">Cytoplasm</location>
    </subcellularLocation>
</comment>
<comment type="similarity">
    <text evidence="1">Belongs to the rhamnose isomerase family.</text>
</comment>
<sequence length="418" mass="47160">MTNSIEQAWDLAKQRFAAVGVDVDAALTRLDTLPVSMHCWQGDDVTGFEDPDGVLTGGIQATGNYPGKARNATELRSDLELALALIPGPKRLNLHAIYLESDTPVARNKIEPRHFSHWVAWAKKHQLGLDFNPSCFSHPLSADGFTLSHADPEIRQFWIEHCQASRRVSAYFGEQLGTPSVMNIWIPDGMKDTPIDRLAPRQRLLSALDEVISEKLNPAHHIDAVESKLFGIGAESYTVGSNEFYMGYAASRQTALCLDAGHFHPTEVISDKISSAMLYVPRLLLHVSRPVRWDSDHVVLLDDETQAIASEIIRHNLFDRVHIGLDFFDASINRIAAWVIGTRNMKKALLRALLEPTDRLRQLELRGDYTARLALLEEQKSLPWQAIWEGYCQRNDVPVDARWLDAVREYEQQILSQR</sequence>
<dbReference type="EC" id="5.3.1.14" evidence="1"/>
<dbReference type="EMBL" id="CP000901">
    <property type="protein sequence ID" value="ABX84872.1"/>
    <property type="molecule type" value="Genomic_DNA"/>
</dbReference>
<dbReference type="RefSeq" id="WP_002209104.1">
    <property type="nucleotide sequence ID" value="NZ_CP009935.1"/>
</dbReference>
<dbReference type="SMR" id="A9QYS2"/>
<dbReference type="KEGG" id="ypg:YpAngola_A0744"/>
<dbReference type="PATRIC" id="fig|349746.12.peg.1692"/>
<dbReference type="UniPathway" id="UPA00541">
    <property type="reaction ID" value="UER00601"/>
</dbReference>
<dbReference type="GO" id="GO:0005737">
    <property type="term" value="C:cytoplasm"/>
    <property type="evidence" value="ECO:0007669"/>
    <property type="project" value="UniProtKB-SubCell"/>
</dbReference>
<dbReference type="GO" id="GO:0008740">
    <property type="term" value="F:L-rhamnose isomerase activity"/>
    <property type="evidence" value="ECO:0007669"/>
    <property type="project" value="UniProtKB-UniRule"/>
</dbReference>
<dbReference type="GO" id="GO:0030145">
    <property type="term" value="F:manganese ion binding"/>
    <property type="evidence" value="ECO:0007669"/>
    <property type="project" value="UniProtKB-UniRule"/>
</dbReference>
<dbReference type="GO" id="GO:0019324">
    <property type="term" value="P:L-lyxose metabolic process"/>
    <property type="evidence" value="ECO:0007669"/>
    <property type="project" value="TreeGrafter"/>
</dbReference>
<dbReference type="GO" id="GO:0019301">
    <property type="term" value="P:rhamnose catabolic process"/>
    <property type="evidence" value="ECO:0007669"/>
    <property type="project" value="UniProtKB-UniRule"/>
</dbReference>
<dbReference type="FunFam" id="3.20.20.150:FF:000006">
    <property type="entry name" value="L-rhamnose isomerase"/>
    <property type="match status" value="1"/>
</dbReference>
<dbReference type="Gene3D" id="3.20.20.150">
    <property type="entry name" value="Divalent-metal-dependent TIM barrel enzymes"/>
    <property type="match status" value="1"/>
</dbReference>
<dbReference type="HAMAP" id="MF_00541">
    <property type="entry name" value="RhaA"/>
    <property type="match status" value="1"/>
</dbReference>
<dbReference type="InterPro" id="IPR050337">
    <property type="entry name" value="L-rhamnose_isomerase"/>
</dbReference>
<dbReference type="InterPro" id="IPR009308">
    <property type="entry name" value="Rhamnose_isomerase"/>
</dbReference>
<dbReference type="InterPro" id="IPR036237">
    <property type="entry name" value="Xyl_isomerase-like_sf"/>
</dbReference>
<dbReference type="NCBIfam" id="NF002203">
    <property type="entry name" value="PRK01076.1"/>
    <property type="match status" value="1"/>
</dbReference>
<dbReference type="NCBIfam" id="TIGR01748">
    <property type="entry name" value="rhaA"/>
    <property type="match status" value="1"/>
</dbReference>
<dbReference type="PANTHER" id="PTHR30268">
    <property type="entry name" value="L-RHAMNOSE ISOMERASE"/>
    <property type="match status" value="1"/>
</dbReference>
<dbReference type="PANTHER" id="PTHR30268:SF0">
    <property type="entry name" value="L-RHAMNOSE ISOMERASE"/>
    <property type="match status" value="1"/>
</dbReference>
<dbReference type="Pfam" id="PF06134">
    <property type="entry name" value="RhaA"/>
    <property type="match status" value="1"/>
</dbReference>
<dbReference type="SUPFAM" id="SSF51658">
    <property type="entry name" value="Xylose isomerase-like"/>
    <property type="match status" value="1"/>
</dbReference>
<reference key="1">
    <citation type="journal article" date="2010" name="J. Bacteriol.">
        <title>Genome sequence of the deep-rooted Yersinia pestis strain Angola reveals new insights into the evolution and pangenome of the plague bacterium.</title>
        <authorList>
            <person name="Eppinger M."/>
            <person name="Worsham P.L."/>
            <person name="Nikolich M.P."/>
            <person name="Riley D.R."/>
            <person name="Sebastian Y."/>
            <person name="Mou S."/>
            <person name="Achtman M."/>
            <person name="Lindler L.E."/>
            <person name="Ravel J."/>
        </authorList>
    </citation>
    <scope>NUCLEOTIDE SEQUENCE [LARGE SCALE GENOMIC DNA]</scope>
    <source>
        <strain>Angola</strain>
    </source>
</reference>